<protein>
    <recommendedName>
        <fullName>Tubulin-specific chaperone E</fullName>
    </recommendedName>
    <alternativeName>
        <fullName>Tubulin-folding cofactor E</fullName>
    </alternativeName>
</protein>
<keyword id="KW-0143">Chaperone</keyword>
<keyword id="KW-0963">Cytoplasm</keyword>
<keyword id="KW-0206">Cytoskeleton</keyword>
<keyword id="KW-0433">Leucine-rich repeat</keyword>
<keyword id="KW-1185">Reference proteome</keyword>
<keyword id="KW-0677">Repeat</keyword>
<sequence length="525" mass="60899">MSNENEKSIVEYFYIGERVKGDDGSVGTIRYQGKVDGFEGNWYGIEWDDPKRGKHQGTVKGKQYFKCINKGSGSFMKYEKLIKGETFMKSISDKFHQKIDNYDDLYVDSTKEDIKIQIQMIGMNQTRENQKKFIAQTLLSASYLPISEIDESPLIYNNFKNLIELNLSNCLLNSWTQIVKLLKQLPNLNRLHLCNNRLSFNIDEFKKEVNSNNEYGNSIDDCNVKDLILVNSNLSNWSIVSSICKYLFKNIESICLSSNSIENINLFKSILNNDNENENENENEIVEQQQQQQPQYLFPTLKSLDLANNNIKSFNDILSSLGNLPQLTELNLNNNQITDIEFNGDVDDGNKSNNGKTNQFKNLKRIYLSNNKINDWKYLDKLDELQSLDELSFRNNPIVDSLLISNSNNSNTNENEIENDIENNNNNIKKDNNNNNKNNKNNKNNKTIFLNRLNIIPRLSNLKKLNLSDITLLERKDAELYFLYENYNSIDKFKNNKKLNYLISIHGEPVYTKMSLQLEKEENGK</sequence>
<feature type="chain" id="PRO_0000345022" description="Tubulin-specific chaperone E">
    <location>
        <begin position="1"/>
        <end position="525"/>
    </location>
</feature>
<feature type="domain" description="CAP-Gly" evidence="2">
    <location>
        <begin position="33"/>
        <end position="77"/>
    </location>
</feature>
<feature type="repeat" description="LRR 1">
    <location>
        <begin position="300"/>
        <end position="321"/>
    </location>
</feature>
<feature type="repeat" description="LRR 2">
    <location>
        <begin position="326"/>
        <end position="347"/>
    </location>
</feature>
<feature type="repeat" description="LRR 3">
    <location>
        <begin position="362"/>
        <end position="383"/>
    </location>
</feature>
<feature type="domain" description="LRRCT">
    <location>
        <begin position="441"/>
        <end position="481"/>
    </location>
</feature>
<feature type="region of interest" description="Disordered" evidence="3">
    <location>
        <begin position="414"/>
        <end position="444"/>
    </location>
</feature>
<feature type="compositionally biased region" description="Low complexity" evidence="3">
    <location>
        <begin position="422"/>
        <end position="444"/>
    </location>
</feature>
<evidence type="ECO:0000250" key="1"/>
<evidence type="ECO:0000255" key="2">
    <source>
        <dbReference type="PROSITE-ProRule" id="PRU00045"/>
    </source>
</evidence>
<evidence type="ECO:0000256" key="3">
    <source>
        <dbReference type="SAM" id="MobiDB-lite"/>
    </source>
</evidence>
<evidence type="ECO:0000305" key="4"/>
<reference key="1">
    <citation type="journal article" date="2005" name="Nature">
        <title>The genome of the social amoeba Dictyostelium discoideum.</title>
        <authorList>
            <person name="Eichinger L."/>
            <person name="Pachebat J.A."/>
            <person name="Gloeckner G."/>
            <person name="Rajandream M.A."/>
            <person name="Sucgang R."/>
            <person name="Berriman M."/>
            <person name="Song J."/>
            <person name="Olsen R."/>
            <person name="Szafranski K."/>
            <person name="Xu Q."/>
            <person name="Tunggal B."/>
            <person name="Kummerfeld S."/>
            <person name="Madera M."/>
            <person name="Konfortov B.A."/>
            <person name="Rivero F."/>
            <person name="Bankier A.T."/>
            <person name="Lehmann R."/>
            <person name="Hamlin N."/>
            <person name="Davies R."/>
            <person name="Gaudet P."/>
            <person name="Fey P."/>
            <person name="Pilcher K."/>
            <person name="Chen G."/>
            <person name="Saunders D."/>
            <person name="Sodergren E.J."/>
            <person name="Davis P."/>
            <person name="Kerhornou A."/>
            <person name="Nie X."/>
            <person name="Hall N."/>
            <person name="Anjard C."/>
            <person name="Hemphill L."/>
            <person name="Bason N."/>
            <person name="Farbrother P."/>
            <person name="Desany B."/>
            <person name="Just E."/>
            <person name="Morio T."/>
            <person name="Rost R."/>
            <person name="Churcher C.M."/>
            <person name="Cooper J."/>
            <person name="Haydock S."/>
            <person name="van Driessche N."/>
            <person name="Cronin A."/>
            <person name="Goodhead I."/>
            <person name="Muzny D.M."/>
            <person name="Mourier T."/>
            <person name="Pain A."/>
            <person name="Lu M."/>
            <person name="Harper D."/>
            <person name="Lindsay R."/>
            <person name="Hauser H."/>
            <person name="James K.D."/>
            <person name="Quiles M."/>
            <person name="Madan Babu M."/>
            <person name="Saito T."/>
            <person name="Buchrieser C."/>
            <person name="Wardroper A."/>
            <person name="Felder M."/>
            <person name="Thangavelu M."/>
            <person name="Johnson D."/>
            <person name="Knights A."/>
            <person name="Loulseged H."/>
            <person name="Mungall K.L."/>
            <person name="Oliver K."/>
            <person name="Price C."/>
            <person name="Quail M.A."/>
            <person name="Urushihara H."/>
            <person name="Hernandez J."/>
            <person name="Rabbinowitsch E."/>
            <person name="Steffen D."/>
            <person name="Sanders M."/>
            <person name="Ma J."/>
            <person name="Kohara Y."/>
            <person name="Sharp S."/>
            <person name="Simmonds M.N."/>
            <person name="Spiegler S."/>
            <person name="Tivey A."/>
            <person name="Sugano S."/>
            <person name="White B."/>
            <person name="Walker D."/>
            <person name="Woodward J.R."/>
            <person name="Winckler T."/>
            <person name="Tanaka Y."/>
            <person name="Shaulsky G."/>
            <person name="Schleicher M."/>
            <person name="Weinstock G.M."/>
            <person name="Rosenthal A."/>
            <person name="Cox E.C."/>
            <person name="Chisholm R.L."/>
            <person name="Gibbs R.A."/>
            <person name="Loomis W.F."/>
            <person name="Platzer M."/>
            <person name="Kay R.R."/>
            <person name="Williams J.G."/>
            <person name="Dear P.H."/>
            <person name="Noegel A.A."/>
            <person name="Barrell B.G."/>
            <person name="Kuspa A."/>
        </authorList>
    </citation>
    <scope>NUCLEOTIDE SEQUENCE [LARGE SCALE GENOMIC DNA]</scope>
    <source>
        <strain>AX4</strain>
    </source>
</reference>
<dbReference type="EMBL" id="AAFI02000005">
    <property type="protein sequence ID" value="EAL72345.1"/>
    <property type="molecule type" value="Genomic_DNA"/>
</dbReference>
<dbReference type="RefSeq" id="XP_646451.1">
    <property type="nucleotide sequence ID" value="XM_641359.1"/>
</dbReference>
<dbReference type="FunCoup" id="Q55CN0">
    <property type="interactions" value="649"/>
</dbReference>
<dbReference type="STRING" id="44689.Q55CN0"/>
<dbReference type="PaxDb" id="44689-DDB0266639"/>
<dbReference type="EnsemblProtists" id="EAL72345">
    <property type="protein sequence ID" value="EAL72345"/>
    <property type="gene ID" value="DDB_G0269990"/>
</dbReference>
<dbReference type="GeneID" id="8617411"/>
<dbReference type="KEGG" id="ddi:DDB_G0269990"/>
<dbReference type="dictyBase" id="DDB_G0269990">
    <property type="gene designation" value="tbcE"/>
</dbReference>
<dbReference type="VEuPathDB" id="AmoebaDB:DDB_G0269990"/>
<dbReference type="eggNOG" id="KOG3207">
    <property type="taxonomic scope" value="Eukaryota"/>
</dbReference>
<dbReference type="HOGENOM" id="CLU_017716_5_1_1"/>
<dbReference type="InParanoid" id="Q55CN0"/>
<dbReference type="OMA" id="NWYGIEW"/>
<dbReference type="PhylomeDB" id="Q55CN0"/>
<dbReference type="PRO" id="PR:Q55CN0"/>
<dbReference type="Proteomes" id="UP000002195">
    <property type="component" value="Chromosome 1"/>
</dbReference>
<dbReference type="GO" id="GO:0005737">
    <property type="term" value="C:cytoplasm"/>
    <property type="evidence" value="ECO:0000318"/>
    <property type="project" value="GO_Central"/>
</dbReference>
<dbReference type="GO" id="GO:0005856">
    <property type="term" value="C:cytoskeleton"/>
    <property type="evidence" value="ECO:0007669"/>
    <property type="project" value="UniProtKB-SubCell"/>
</dbReference>
<dbReference type="GO" id="GO:0043014">
    <property type="term" value="F:alpha-tubulin binding"/>
    <property type="evidence" value="ECO:0000318"/>
    <property type="project" value="GO_Central"/>
</dbReference>
<dbReference type="GO" id="GO:0000226">
    <property type="term" value="P:microtubule cytoskeleton organization"/>
    <property type="evidence" value="ECO:0000318"/>
    <property type="project" value="GO_Central"/>
</dbReference>
<dbReference type="GO" id="GO:0007023">
    <property type="term" value="P:post-chaperonin tubulin folding pathway"/>
    <property type="evidence" value="ECO:0000318"/>
    <property type="project" value="GO_Central"/>
</dbReference>
<dbReference type="GO" id="GO:0007021">
    <property type="term" value="P:tubulin complex assembly"/>
    <property type="evidence" value="ECO:0000318"/>
    <property type="project" value="GO_Central"/>
</dbReference>
<dbReference type="FunFam" id="2.30.30.190:FF:000016">
    <property type="entry name" value="Tubulin-folding cofactor E"/>
    <property type="match status" value="1"/>
</dbReference>
<dbReference type="Gene3D" id="2.30.30.190">
    <property type="entry name" value="CAP Gly-rich-like domain"/>
    <property type="match status" value="1"/>
</dbReference>
<dbReference type="Gene3D" id="3.80.10.10">
    <property type="entry name" value="Ribonuclease Inhibitor"/>
    <property type="match status" value="3"/>
</dbReference>
<dbReference type="InterPro" id="IPR036859">
    <property type="entry name" value="CAP-Gly_dom_sf"/>
</dbReference>
<dbReference type="InterPro" id="IPR000938">
    <property type="entry name" value="CAP-Gly_domain"/>
</dbReference>
<dbReference type="InterPro" id="IPR001611">
    <property type="entry name" value="Leu-rich_rpt"/>
</dbReference>
<dbReference type="InterPro" id="IPR025875">
    <property type="entry name" value="Leu-rich_rpt_4"/>
</dbReference>
<dbReference type="InterPro" id="IPR003591">
    <property type="entry name" value="Leu-rich_rpt_typical-subtyp"/>
</dbReference>
<dbReference type="InterPro" id="IPR032675">
    <property type="entry name" value="LRR_dom_sf"/>
</dbReference>
<dbReference type="PANTHER" id="PTHR22710">
    <property type="entry name" value="X-RAY RADIATION RESISTANCE ASSOCIATED PROTEIN 1 XRRA1"/>
    <property type="match status" value="1"/>
</dbReference>
<dbReference type="PANTHER" id="PTHR22710:SF2">
    <property type="entry name" value="X-RAY RADIATION RESISTANCE-ASSOCIATED PROTEIN 1"/>
    <property type="match status" value="1"/>
</dbReference>
<dbReference type="Pfam" id="PF01302">
    <property type="entry name" value="CAP_GLY"/>
    <property type="match status" value="1"/>
</dbReference>
<dbReference type="Pfam" id="PF12799">
    <property type="entry name" value="LRR_4"/>
    <property type="match status" value="1"/>
</dbReference>
<dbReference type="SMART" id="SM01052">
    <property type="entry name" value="CAP_GLY"/>
    <property type="match status" value="1"/>
</dbReference>
<dbReference type="SMART" id="SM00365">
    <property type="entry name" value="LRR_SD22"/>
    <property type="match status" value="5"/>
</dbReference>
<dbReference type="SMART" id="SM00369">
    <property type="entry name" value="LRR_TYP"/>
    <property type="match status" value="3"/>
</dbReference>
<dbReference type="SUPFAM" id="SSF74924">
    <property type="entry name" value="Cap-Gly domain"/>
    <property type="match status" value="1"/>
</dbReference>
<dbReference type="SUPFAM" id="SSF52047">
    <property type="entry name" value="RNI-like"/>
    <property type="match status" value="1"/>
</dbReference>
<dbReference type="PROSITE" id="PS00845">
    <property type="entry name" value="CAP_GLY_1"/>
    <property type="match status" value="1"/>
</dbReference>
<dbReference type="PROSITE" id="PS50245">
    <property type="entry name" value="CAP_GLY_2"/>
    <property type="match status" value="1"/>
</dbReference>
<dbReference type="PROSITE" id="PS51450">
    <property type="entry name" value="LRR"/>
    <property type="match status" value="8"/>
</dbReference>
<organism>
    <name type="scientific">Dictyostelium discoideum</name>
    <name type="common">Social amoeba</name>
    <dbReference type="NCBI Taxonomy" id="44689"/>
    <lineage>
        <taxon>Eukaryota</taxon>
        <taxon>Amoebozoa</taxon>
        <taxon>Evosea</taxon>
        <taxon>Eumycetozoa</taxon>
        <taxon>Dictyostelia</taxon>
        <taxon>Dictyosteliales</taxon>
        <taxon>Dictyosteliaceae</taxon>
        <taxon>Dictyostelium</taxon>
    </lineage>
</organism>
<accession>Q55CN0</accession>
<proteinExistence type="inferred from homology"/>
<comment type="function">
    <text>Tubulin-folding protein; involved in the second step of the tubulin folding pathway.</text>
</comment>
<comment type="subunit">
    <text evidence="1">Supercomplex made of cofactors A to E. Cofactors A and D function by capturing and stabilizing tubulin in a quasi-native conformation. Cofactor E binds to the cofactor D-tubulin complex; interaction with cofactor C then causes the release of tubulin polypeptides that are committed to the native state (By similarity).</text>
</comment>
<comment type="subcellular location">
    <subcellularLocation>
        <location evidence="1">Cytoplasm</location>
    </subcellularLocation>
    <subcellularLocation>
        <location evidence="1">Cytoplasm</location>
        <location evidence="1">Cytoskeleton</location>
    </subcellularLocation>
</comment>
<comment type="similarity">
    <text evidence="4">Belongs to the TBCE family.</text>
</comment>
<name>TBCE_DICDI</name>
<gene>
    <name type="primary">tbce</name>
    <name type="ORF">DDB_G0269990</name>
</gene>